<comment type="similarity">
    <text evidence="2">Belongs to the bacterial ribosomal protein bL35 family.</text>
</comment>
<comment type="sequence caution" evidence="4">
    <conflict type="erroneous initiation">
        <sequence resource="EMBL-CDS" id="AAC22964"/>
    </conflict>
</comment>
<feature type="initiator methionine" description="Removed" evidence="1">
    <location>
        <position position="1"/>
    </location>
</feature>
<feature type="chain" id="PRO_0000177366" description="Large ribosomal subunit protein bL35">
    <location>
        <begin position="2"/>
        <end position="65"/>
    </location>
</feature>
<feature type="region of interest" description="Disordered" evidence="3">
    <location>
        <begin position="1"/>
        <end position="26"/>
    </location>
</feature>
<feature type="compositionally biased region" description="Basic residues" evidence="3">
    <location>
        <begin position="10"/>
        <end position="26"/>
    </location>
</feature>
<organism>
    <name type="scientific">Haemophilus influenzae (strain ATCC 51907 / DSM 11121 / KW20 / Rd)</name>
    <dbReference type="NCBI Taxonomy" id="71421"/>
    <lineage>
        <taxon>Bacteria</taxon>
        <taxon>Pseudomonadati</taxon>
        <taxon>Pseudomonadota</taxon>
        <taxon>Gammaproteobacteria</taxon>
        <taxon>Pasteurellales</taxon>
        <taxon>Pasteurellaceae</taxon>
        <taxon>Haemophilus</taxon>
    </lineage>
</organism>
<keyword id="KW-1185">Reference proteome</keyword>
<keyword id="KW-0687">Ribonucleoprotein</keyword>
<keyword id="KW-0689">Ribosomal protein</keyword>
<gene>
    <name evidence="2" type="primary">rpmI</name>
    <name evidence="2" type="synonym">rpl35</name>
    <name type="ordered locus">HI_1319</name>
</gene>
<evidence type="ECO:0000250" key="1"/>
<evidence type="ECO:0000255" key="2">
    <source>
        <dbReference type="HAMAP-Rule" id="MF_00514"/>
    </source>
</evidence>
<evidence type="ECO:0000256" key="3">
    <source>
        <dbReference type="SAM" id="MobiDB-lite"/>
    </source>
</evidence>
<evidence type="ECO:0000305" key="4"/>
<name>RL35_HAEIN</name>
<proteinExistence type="inferred from homology"/>
<dbReference type="EMBL" id="L42023">
    <property type="protein sequence ID" value="AAC22964.1"/>
    <property type="status" value="ALT_INIT"/>
    <property type="molecule type" value="Genomic_DNA"/>
</dbReference>
<dbReference type="RefSeq" id="NP_439470.1">
    <property type="nucleotide sequence ID" value="NC_000907.1"/>
</dbReference>
<dbReference type="SMR" id="P67917"/>
<dbReference type="STRING" id="71421.HI_1319"/>
<dbReference type="EnsemblBacteria" id="AAC22964">
    <property type="protein sequence ID" value="AAC22964"/>
    <property type="gene ID" value="HI_1319"/>
</dbReference>
<dbReference type="KEGG" id="hin:HI_1319"/>
<dbReference type="PATRIC" id="fig|71421.8.peg.1371"/>
<dbReference type="eggNOG" id="COG0291">
    <property type="taxonomic scope" value="Bacteria"/>
</dbReference>
<dbReference type="HOGENOM" id="CLU_169643_1_1_6"/>
<dbReference type="PhylomeDB" id="P67917"/>
<dbReference type="BioCyc" id="HINF71421:G1GJ1-1344-MONOMER"/>
<dbReference type="PRO" id="PR:P67917"/>
<dbReference type="Proteomes" id="UP000000579">
    <property type="component" value="Chromosome"/>
</dbReference>
<dbReference type="GO" id="GO:0022625">
    <property type="term" value="C:cytosolic large ribosomal subunit"/>
    <property type="evidence" value="ECO:0000318"/>
    <property type="project" value="GO_Central"/>
</dbReference>
<dbReference type="GO" id="GO:0003735">
    <property type="term" value="F:structural constituent of ribosome"/>
    <property type="evidence" value="ECO:0000318"/>
    <property type="project" value="GO_Central"/>
</dbReference>
<dbReference type="GO" id="GO:0006412">
    <property type="term" value="P:translation"/>
    <property type="evidence" value="ECO:0007669"/>
    <property type="project" value="UniProtKB-UniRule"/>
</dbReference>
<dbReference type="FunFam" id="4.10.410.60:FF:000001">
    <property type="entry name" value="50S ribosomal protein L35"/>
    <property type="match status" value="1"/>
</dbReference>
<dbReference type="Gene3D" id="4.10.410.60">
    <property type="match status" value="1"/>
</dbReference>
<dbReference type="HAMAP" id="MF_00514">
    <property type="entry name" value="Ribosomal_bL35"/>
    <property type="match status" value="1"/>
</dbReference>
<dbReference type="InterPro" id="IPR001706">
    <property type="entry name" value="Ribosomal_bL35"/>
</dbReference>
<dbReference type="InterPro" id="IPR021137">
    <property type="entry name" value="Ribosomal_bL35-like"/>
</dbReference>
<dbReference type="InterPro" id="IPR018265">
    <property type="entry name" value="Ribosomal_bL35_CS"/>
</dbReference>
<dbReference type="InterPro" id="IPR037229">
    <property type="entry name" value="Ribosomal_bL35_sf"/>
</dbReference>
<dbReference type="NCBIfam" id="TIGR00001">
    <property type="entry name" value="rpmI_bact"/>
    <property type="match status" value="1"/>
</dbReference>
<dbReference type="PANTHER" id="PTHR33343">
    <property type="entry name" value="54S RIBOSOMAL PROTEIN BL35M"/>
    <property type="match status" value="1"/>
</dbReference>
<dbReference type="PANTHER" id="PTHR33343:SF1">
    <property type="entry name" value="LARGE RIBOSOMAL SUBUNIT PROTEIN BL35M"/>
    <property type="match status" value="1"/>
</dbReference>
<dbReference type="Pfam" id="PF01632">
    <property type="entry name" value="Ribosomal_L35p"/>
    <property type="match status" value="1"/>
</dbReference>
<dbReference type="PRINTS" id="PR00064">
    <property type="entry name" value="RIBOSOMALL35"/>
</dbReference>
<dbReference type="SUPFAM" id="SSF143034">
    <property type="entry name" value="L35p-like"/>
    <property type="match status" value="1"/>
</dbReference>
<dbReference type="PROSITE" id="PS00936">
    <property type="entry name" value="RIBOSOMAL_L35"/>
    <property type="match status" value="1"/>
</dbReference>
<protein>
    <recommendedName>
        <fullName evidence="2">Large ribosomal subunit protein bL35</fullName>
    </recommendedName>
    <alternativeName>
        <fullName evidence="4">50S ribosomal protein L35</fullName>
    </alternativeName>
</protein>
<sequence length="65" mass="7438">MPKIKTVRGAAKRFKKTASGGFKRKQSHLRHILTKKTTKRKRHLRHKSMVAKADQVLVVACLPYA</sequence>
<accession>P67917</accession>
<accession>P45519</accession>
<reference key="1">
    <citation type="journal article" date="1995" name="Science">
        <title>Whole-genome random sequencing and assembly of Haemophilus influenzae Rd.</title>
        <authorList>
            <person name="Fleischmann R.D."/>
            <person name="Adams M.D."/>
            <person name="White O."/>
            <person name="Clayton R.A."/>
            <person name="Kirkness E.F."/>
            <person name="Kerlavage A.R."/>
            <person name="Bult C.J."/>
            <person name="Tomb J.-F."/>
            <person name="Dougherty B.A."/>
            <person name="Merrick J.M."/>
            <person name="McKenney K."/>
            <person name="Sutton G.G."/>
            <person name="FitzHugh W."/>
            <person name="Fields C.A."/>
            <person name="Gocayne J.D."/>
            <person name="Scott J.D."/>
            <person name="Shirley R."/>
            <person name="Liu L.-I."/>
            <person name="Glodek A."/>
            <person name="Kelley J.M."/>
            <person name="Weidman J.F."/>
            <person name="Phillips C.A."/>
            <person name="Spriggs T."/>
            <person name="Hedblom E."/>
            <person name="Cotton M.D."/>
            <person name="Utterback T.R."/>
            <person name="Hanna M.C."/>
            <person name="Nguyen D.T."/>
            <person name="Saudek D.M."/>
            <person name="Brandon R.C."/>
            <person name="Fine L.D."/>
            <person name="Fritchman J.L."/>
            <person name="Fuhrmann J.L."/>
            <person name="Geoghagen N.S.M."/>
            <person name="Gnehm C.L."/>
            <person name="McDonald L.A."/>
            <person name="Small K.V."/>
            <person name="Fraser C.M."/>
            <person name="Smith H.O."/>
            <person name="Venter J.C."/>
        </authorList>
    </citation>
    <scope>NUCLEOTIDE SEQUENCE [LARGE SCALE GENOMIC DNA]</scope>
    <source>
        <strain>ATCC 51907 / DSM 11121 / KW20 / Rd</strain>
    </source>
</reference>
<reference key="2">
    <citation type="submission" date="1996-09" db="EMBL/GenBank/DDBJ databases">
        <authorList>
            <person name="White O."/>
            <person name="Clayton R.A."/>
            <person name="Kerlavage A.R."/>
            <person name="Fleischmann R.D."/>
        </authorList>
    </citation>
    <scope>SEQUENCE REVISION</scope>
</reference>